<reference key="1">
    <citation type="journal article" date="2007" name="PLoS ONE">
        <title>Molecular correlates of host specialization in Staphylococcus aureus.</title>
        <authorList>
            <person name="Herron-Olson L."/>
            <person name="Fitzgerald J.R."/>
            <person name="Musser J.M."/>
            <person name="Kapur V."/>
        </authorList>
    </citation>
    <scope>NUCLEOTIDE SEQUENCE [LARGE SCALE GENOMIC DNA]</scope>
    <source>
        <strain>bovine RF122 / ET3-1</strain>
    </source>
</reference>
<feature type="chain" id="PRO_0000232559" description="Flotillin-like protein FloA">
    <location>
        <begin position="1"/>
        <end position="329"/>
    </location>
</feature>
<feature type="transmembrane region" description="Helical" evidence="1">
    <location>
        <begin position="6"/>
        <end position="26"/>
    </location>
</feature>
<feature type="transmembrane region" description="Helical" evidence="1">
    <location>
        <begin position="27"/>
        <end position="47"/>
    </location>
</feature>
<protein>
    <recommendedName>
        <fullName evidence="1">Flotillin-like protein FloA</fullName>
    </recommendedName>
</protein>
<evidence type="ECO:0000255" key="1">
    <source>
        <dbReference type="HAMAP-Rule" id="MF_01562"/>
    </source>
</evidence>
<name>FLOA_STAAB</name>
<keyword id="KW-1003">Cell membrane</keyword>
<keyword id="KW-0472">Membrane</keyword>
<keyword id="KW-0812">Transmembrane</keyword>
<keyword id="KW-1133">Transmembrane helix</keyword>
<dbReference type="EMBL" id="AJ938182">
    <property type="protein sequence ID" value="CAI81134.1"/>
    <property type="molecule type" value="Genomic_DNA"/>
</dbReference>
<dbReference type="RefSeq" id="WP_000492114.1">
    <property type="nucleotide sequence ID" value="NC_007622.1"/>
</dbReference>
<dbReference type="SMR" id="Q2YT06"/>
<dbReference type="GeneID" id="98345944"/>
<dbReference type="KEGG" id="sab:SAB1445c"/>
<dbReference type="HOGENOM" id="CLU_836378_0_0_9"/>
<dbReference type="GO" id="GO:0045121">
    <property type="term" value="C:membrane raft"/>
    <property type="evidence" value="ECO:0007669"/>
    <property type="project" value="UniProtKB-SubCell"/>
</dbReference>
<dbReference type="GO" id="GO:0005886">
    <property type="term" value="C:plasma membrane"/>
    <property type="evidence" value="ECO:0007669"/>
    <property type="project" value="UniProtKB-SubCell"/>
</dbReference>
<dbReference type="HAMAP" id="MF_01562">
    <property type="entry name" value="FloA"/>
    <property type="match status" value="1"/>
</dbReference>
<dbReference type="InterPro" id="IPR022853">
    <property type="entry name" value="FloA"/>
</dbReference>
<dbReference type="NCBIfam" id="NF010186">
    <property type="entry name" value="PRK13665.1"/>
    <property type="match status" value="1"/>
</dbReference>
<dbReference type="Pfam" id="PF12127">
    <property type="entry name" value="FloA"/>
    <property type="match status" value="1"/>
</dbReference>
<comment type="function">
    <text evidence="1">Found in functional membrane microdomains (FMM) that may be equivalent to eukaryotic membrane rafts. FMMs are highly dynamic and increase in number as cells age. Flotillins are thought to be important factors in membrane fluidity.</text>
</comment>
<comment type="subunit">
    <text evidence="1">Homooligomerizes.</text>
</comment>
<comment type="subcellular location">
    <subcellularLocation>
        <location evidence="1">Cell membrane</location>
        <topology evidence="1">Multi-pass membrane protein</topology>
    </subcellularLocation>
    <subcellularLocation>
        <location evidence="1">Membrane raft</location>
        <topology evidence="1">Multi-pass membrane protein</topology>
    </subcellularLocation>
</comment>
<comment type="similarity">
    <text evidence="1">Belongs to the flotillin-like FloA family.</text>
</comment>
<sequence length="329" mass="35181">MFSLSFIVIAVIIVVALLILFSFVPIGLWISALAAGVHVGIGTLVGMRLRRVSPRKVIAPLIKAHKAGLALTTNQLESHYLAGGNVDRVVDANIAAQRADIDLPFERAAAIDLAGRDVLEAVQMSVNPKVIETPFIAGVAMNGIEVKAKARITVRANIARLVGGAGEETIIARVGEGIVSTIGSSKHHTEVLENPDNISKTVLSKGLDSGTAFEILSIDIADVDISKNIGADLQTEQALADKNIAQAKAEERRAMAVATEQEMKARVQEMHAKVVEAESEVPLAMAEALRSGNISVKDYYNLKNIEADTGMRNAINKRTDQSDDESPEH</sequence>
<accession>Q2YT06</accession>
<organism>
    <name type="scientific">Staphylococcus aureus (strain bovine RF122 / ET3-1)</name>
    <dbReference type="NCBI Taxonomy" id="273036"/>
    <lineage>
        <taxon>Bacteria</taxon>
        <taxon>Bacillati</taxon>
        <taxon>Bacillota</taxon>
        <taxon>Bacilli</taxon>
        <taxon>Bacillales</taxon>
        <taxon>Staphylococcaceae</taxon>
        <taxon>Staphylococcus</taxon>
    </lineage>
</organism>
<proteinExistence type="inferred from homology"/>
<gene>
    <name evidence="1" type="primary">floA</name>
    <name type="ordered locus">SAB1445c</name>
</gene>